<keyword id="KW-0030">Aminoacyl-tRNA synthetase</keyword>
<keyword id="KW-0067">ATP-binding</keyword>
<keyword id="KW-0963">Cytoplasm</keyword>
<keyword id="KW-0436">Ligase</keyword>
<keyword id="KW-0460">Magnesium</keyword>
<keyword id="KW-0479">Metal-binding</keyword>
<keyword id="KW-0547">Nucleotide-binding</keyword>
<keyword id="KW-0648">Protein biosynthesis</keyword>
<keyword id="KW-1185">Reference proteome</keyword>
<accession>P41258</accession>
<accession>O68607</accession>
<accession>Q0PBA9</accession>
<proteinExistence type="inferred from homology"/>
<dbReference type="EC" id="6.1.1.6"/>
<dbReference type="EMBL" id="M63448">
    <property type="protein sequence ID" value="AAA23029.1"/>
    <property type="molecule type" value="Genomic_DNA"/>
</dbReference>
<dbReference type="EMBL" id="AL111168">
    <property type="protein sequence ID" value="CAL34551.1"/>
    <property type="molecule type" value="Genomic_DNA"/>
</dbReference>
<dbReference type="EMBL" id="AF052056">
    <property type="protein sequence ID" value="AAC64260.1"/>
    <property type="molecule type" value="Genomic_DNA"/>
</dbReference>
<dbReference type="PIR" id="A42609">
    <property type="entry name" value="A42609"/>
</dbReference>
<dbReference type="PIR" id="G81383">
    <property type="entry name" value="G81383"/>
</dbReference>
<dbReference type="RefSeq" id="WP_002858694.1">
    <property type="nucleotide sequence ID" value="NZ_SZUC01000004.1"/>
</dbReference>
<dbReference type="RefSeq" id="YP_002343838.1">
    <property type="nucleotide sequence ID" value="NC_002163.1"/>
</dbReference>
<dbReference type="SMR" id="P41258"/>
<dbReference type="IntAct" id="P41258">
    <property type="interactions" value="54"/>
</dbReference>
<dbReference type="STRING" id="192222.Cj0401"/>
<dbReference type="PaxDb" id="192222-Cj0401"/>
<dbReference type="EnsemblBacteria" id="CAL34551">
    <property type="protein sequence ID" value="CAL34551"/>
    <property type="gene ID" value="Cj0401"/>
</dbReference>
<dbReference type="GeneID" id="904725"/>
<dbReference type="KEGG" id="cje:Cj0401"/>
<dbReference type="PATRIC" id="fig|192222.6.peg.392"/>
<dbReference type="eggNOG" id="COG1190">
    <property type="taxonomic scope" value="Bacteria"/>
</dbReference>
<dbReference type="HOGENOM" id="CLU_008255_6_0_7"/>
<dbReference type="OrthoDB" id="9801152at2"/>
<dbReference type="Proteomes" id="UP000000799">
    <property type="component" value="Chromosome"/>
</dbReference>
<dbReference type="GO" id="GO:0005829">
    <property type="term" value="C:cytosol"/>
    <property type="evidence" value="ECO:0007669"/>
    <property type="project" value="TreeGrafter"/>
</dbReference>
<dbReference type="GO" id="GO:0005524">
    <property type="term" value="F:ATP binding"/>
    <property type="evidence" value="ECO:0007669"/>
    <property type="project" value="UniProtKB-UniRule"/>
</dbReference>
<dbReference type="GO" id="GO:0004824">
    <property type="term" value="F:lysine-tRNA ligase activity"/>
    <property type="evidence" value="ECO:0007669"/>
    <property type="project" value="UniProtKB-UniRule"/>
</dbReference>
<dbReference type="GO" id="GO:0000287">
    <property type="term" value="F:magnesium ion binding"/>
    <property type="evidence" value="ECO:0007669"/>
    <property type="project" value="UniProtKB-UniRule"/>
</dbReference>
<dbReference type="GO" id="GO:0000049">
    <property type="term" value="F:tRNA binding"/>
    <property type="evidence" value="ECO:0007669"/>
    <property type="project" value="TreeGrafter"/>
</dbReference>
<dbReference type="GO" id="GO:0006430">
    <property type="term" value="P:lysyl-tRNA aminoacylation"/>
    <property type="evidence" value="ECO:0007669"/>
    <property type="project" value="UniProtKB-UniRule"/>
</dbReference>
<dbReference type="CDD" id="cd00775">
    <property type="entry name" value="LysRS_core"/>
    <property type="match status" value="1"/>
</dbReference>
<dbReference type="CDD" id="cd04322">
    <property type="entry name" value="LysRS_N"/>
    <property type="match status" value="1"/>
</dbReference>
<dbReference type="Gene3D" id="3.30.930.10">
    <property type="entry name" value="Bira Bifunctional Protein, Domain 2"/>
    <property type="match status" value="1"/>
</dbReference>
<dbReference type="Gene3D" id="2.40.50.140">
    <property type="entry name" value="Nucleic acid-binding proteins"/>
    <property type="match status" value="1"/>
</dbReference>
<dbReference type="HAMAP" id="MF_00252">
    <property type="entry name" value="Lys_tRNA_synth_class2"/>
    <property type="match status" value="1"/>
</dbReference>
<dbReference type="InterPro" id="IPR004364">
    <property type="entry name" value="Aa-tRNA-synt_II"/>
</dbReference>
<dbReference type="InterPro" id="IPR006195">
    <property type="entry name" value="aa-tRNA-synth_II"/>
</dbReference>
<dbReference type="InterPro" id="IPR045864">
    <property type="entry name" value="aa-tRNA-synth_II/BPL/LPL"/>
</dbReference>
<dbReference type="InterPro" id="IPR002313">
    <property type="entry name" value="Lys-tRNA-ligase_II"/>
</dbReference>
<dbReference type="InterPro" id="IPR044136">
    <property type="entry name" value="Lys-tRNA-ligase_II_N"/>
</dbReference>
<dbReference type="InterPro" id="IPR018149">
    <property type="entry name" value="Lys-tRNA-synth_II_C"/>
</dbReference>
<dbReference type="InterPro" id="IPR012340">
    <property type="entry name" value="NA-bd_OB-fold"/>
</dbReference>
<dbReference type="InterPro" id="IPR004365">
    <property type="entry name" value="NA-bd_OB_tRNA"/>
</dbReference>
<dbReference type="NCBIfam" id="TIGR00499">
    <property type="entry name" value="lysS_bact"/>
    <property type="match status" value="1"/>
</dbReference>
<dbReference type="NCBIfam" id="NF001756">
    <property type="entry name" value="PRK00484.1"/>
    <property type="match status" value="1"/>
</dbReference>
<dbReference type="PANTHER" id="PTHR42918:SF15">
    <property type="entry name" value="LYSINE--TRNA LIGASE, CHLOROPLASTIC_MITOCHONDRIAL"/>
    <property type="match status" value="1"/>
</dbReference>
<dbReference type="PANTHER" id="PTHR42918">
    <property type="entry name" value="LYSYL-TRNA SYNTHETASE"/>
    <property type="match status" value="1"/>
</dbReference>
<dbReference type="Pfam" id="PF00152">
    <property type="entry name" value="tRNA-synt_2"/>
    <property type="match status" value="1"/>
</dbReference>
<dbReference type="Pfam" id="PF01336">
    <property type="entry name" value="tRNA_anti-codon"/>
    <property type="match status" value="1"/>
</dbReference>
<dbReference type="PRINTS" id="PR00982">
    <property type="entry name" value="TRNASYNTHLYS"/>
</dbReference>
<dbReference type="SUPFAM" id="SSF55681">
    <property type="entry name" value="Class II aaRS and biotin synthetases"/>
    <property type="match status" value="1"/>
</dbReference>
<dbReference type="SUPFAM" id="SSF50249">
    <property type="entry name" value="Nucleic acid-binding proteins"/>
    <property type="match status" value="1"/>
</dbReference>
<dbReference type="PROSITE" id="PS50862">
    <property type="entry name" value="AA_TRNA_LIGASE_II"/>
    <property type="match status" value="1"/>
</dbReference>
<comment type="catalytic activity">
    <reaction>
        <text>tRNA(Lys) + L-lysine + ATP = L-lysyl-tRNA(Lys) + AMP + diphosphate</text>
        <dbReference type="Rhea" id="RHEA:20792"/>
        <dbReference type="Rhea" id="RHEA-COMP:9696"/>
        <dbReference type="Rhea" id="RHEA-COMP:9697"/>
        <dbReference type="ChEBI" id="CHEBI:30616"/>
        <dbReference type="ChEBI" id="CHEBI:32551"/>
        <dbReference type="ChEBI" id="CHEBI:33019"/>
        <dbReference type="ChEBI" id="CHEBI:78442"/>
        <dbReference type="ChEBI" id="CHEBI:78529"/>
        <dbReference type="ChEBI" id="CHEBI:456215"/>
        <dbReference type="EC" id="6.1.1.6"/>
    </reaction>
</comment>
<comment type="cofactor">
    <cofactor evidence="1">
        <name>Mg(2+)</name>
        <dbReference type="ChEBI" id="CHEBI:18420"/>
    </cofactor>
    <text evidence="1">Binds 3 Mg(2+) ions per subunit.</text>
</comment>
<comment type="subunit">
    <text evidence="1">Homodimer.</text>
</comment>
<comment type="subcellular location">
    <subcellularLocation>
        <location>Cytoplasm</location>
    </subcellularLocation>
</comment>
<comment type="similarity">
    <text evidence="2">Belongs to the class-II aminoacyl-tRNA synthetase family.</text>
</comment>
<feature type="chain" id="PRO_0000152608" description="Lysine--tRNA ligase">
    <location>
        <begin position="1"/>
        <end position="501"/>
    </location>
</feature>
<feature type="binding site" evidence="1">
    <location>
        <position position="404"/>
    </location>
    <ligand>
        <name>Mg(2+)</name>
        <dbReference type="ChEBI" id="CHEBI:18420"/>
        <label>1</label>
    </ligand>
</feature>
<feature type="binding site" evidence="1">
    <location>
        <position position="411"/>
    </location>
    <ligand>
        <name>Mg(2+)</name>
        <dbReference type="ChEBI" id="CHEBI:18420"/>
        <label>1</label>
    </ligand>
</feature>
<feature type="binding site" evidence="1">
    <location>
        <position position="411"/>
    </location>
    <ligand>
        <name>Mg(2+)</name>
        <dbReference type="ChEBI" id="CHEBI:18420"/>
        <label>2</label>
    </ligand>
</feature>
<feature type="sequence conflict" description="In Ref. 1; AAA23029." evidence="2" ref="1">
    <original>N</original>
    <variation>K</variation>
    <location>
        <position position="19"/>
    </location>
</feature>
<organism>
    <name type="scientific">Campylobacter jejuni subsp. jejuni serotype O:2 (strain ATCC 700819 / NCTC 11168)</name>
    <dbReference type="NCBI Taxonomy" id="192222"/>
    <lineage>
        <taxon>Bacteria</taxon>
        <taxon>Pseudomonadati</taxon>
        <taxon>Campylobacterota</taxon>
        <taxon>Epsilonproteobacteria</taxon>
        <taxon>Campylobacterales</taxon>
        <taxon>Campylobacteraceae</taxon>
        <taxon>Campylobacter</taxon>
    </lineage>
</organism>
<evidence type="ECO:0000250" key="1"/>
<evidence type="ECO:0000305" key="2"/>
<name>SYK_CAMJE</name>
<protein>
    <recommendedName>
        <fullName>Lysine--tRNA ligase</fullName>
        <ecNumber>6.1.1.6</ecNumber>
    </recommendedName>
    <alternativeName>
        <fullName>Lysyl-tRNA synthetase</fullName>
        <shortName>LysRS</shortName>
    </alternativeName>
</protein>
<gene>
    <name type="primary">lysS</name>
    <name type="ordered locus">Cj0401</name>
</gene>
<reference key="1">
    <citation type="journal article" date="1992" name="J. Bacteriol.">
        <title>Lysyl-tRNA synthetase gene of Campylobacter jejuni.</title>
        <authorList>
            <person name="Chan V.L."/>
            <person name="Bingham H.L."/>
        </authorList>
    </citation>
    <scope>NUCLEOTIDE SEQUENCE [GENOMIC DNA]</scope>
    <source>
        <strain>ATCC 43431 / TGH 9011 / Serotype O:3</strain>
    </source>
</reference>
<reference key="2">
    <citation type="journal article" date="2000" name="Nature">
        <title>The genome sequence of the food-borne pathogen Campylobacter jejuni reveals hypervariable sequences.</title>
        <authorList>
            <person name="Parkhill J."/>
            <person name="Wren B.W."/>
            <person name="Mungall K.L."/>
            <person name="Ketley J.M."/>
            <person name="Churcher C.M."/>
            <person name="Basham D."/>
            <person name="Chillingworth T."/>
            <person name="Davies R.M."/>
            <person name="Feltwell T."/>
            <person name="Holroyd S."/>
            <person name="Jagels K."/>
            <person name="Karlyshev A.V."/>
            <person name="Moule S."/>
            <person name="Pallen M.J."/>
            <person name="Penn C.W."/>
            <person name="Quail M.A."/>
            <person name="Rajandream M.A."/>
            <person name="Rutherford K.M."/>
            <person name="van Vliet A.H.M."/>
            <person name="Whitehead S."/>
            <person name="Barrell B.G."/>
        </authorList>
    </citation>
    <scope>NUCLEOTIDE SEQUENCE [LARGE SCALE GENOMIC DNA]</scope>
    <source>
        <strain>ATCC 700819 / NCTC 11168</strain>
    </source>
</reference>
<reference key="3">
    <citation type="submission" date="1998-04" db="EMBL/GenBank/DDBJ databases">
        <title>Characterisation of a Campylobacter jejuni fur mutant.</title>
        <authorList>
            <person name="van Vliet A.H.M."/>
            <person name="Wooldridge K.G."/>
            <person name="Ketley J.M."/>
        </authorList>
    </citation>
    <scope>NUCLEOTIDE SEQUENCE [GENOMIC DNA] OF 1-355</scope>
    <source>
        <strain>ATCC 700819 / NCTC 11168</strain>
    </source>
</reference>
<sequence>MFDNILEQQRIEKAKELKNLGINPYPHFLEKEMSLKTFKDKFSYILEQVEKRDESVNAVVAGRLKLLRIAGKSIFANIEDEDTNLQIYFSKDSVGEELYTILKKNLEVGDIVLVKGFPFVTKTGEFSLHASEVKLATKAIVPLPEKYHGLTDIEQRYRKRYVDMIMNVEVRKDFLVRSKVVSLIRHFFENKGFLEVETPMMHPIAGGANAKPFVTFHNSLGVERFLRIAPELYLKRLIVGGFEAVFEINRCFRNEGMDLTHNPEFTTIEFYWAYHNYKDLMDLTEELFALLLDKLNLGKTIEFDGKMINFSKPFERITYKDALCKYGGLDRDLIEDKEKILTKLKADGFEANEKLELGHLQAELFDNYVEEKLINPTFVIDFPISISPLSRRSDEDSQIAERFELFICGRELANGFNELNDPLDQYERFLKQIEAKNAGDEEACEMDEDFVNALGYGMPPTAGQGIGIDRLVMLLTNKKSIRDVILFPAMRPLKSELKEKE</sequence>